<accession>A1JJW5</accession>
<organism>
    <name type="scientific">Yersinia enterocolitica serotype O:8 / biotype 1B (strain NCTC 13174 / 8081)</name>
    <dbReference type="NCBI Taxonomy" id="393305"/>
    <lineage>
        <taxon>Bacteria</taxon>
        <taxon>Pseudomonadati</taxon>
        <taxon>Pseudomonadota</taxon>
        <taxon>Gammaproteobacteria</taxon>
        <taxon>Enterobacterales</taxon>
        <taxon>Yersiniaceae</taxon>
        <taxon>Yersinia</taxon>
    </lineage>
</organism>
<evidence type="ECO:0000255" key="1">
    <source>
        <dbReference type="HAMAP-Rule" id="MF_01030"/>
    </source>
</evidence>
<name>SDHD_YERE8</name>
<dbReference type="EC" id="4.3.1.18" evidence="1"/>
<dbReference type="EMBL" id="AM286415">
    <property type="protein sequence ID" value="CAL10902.1"/>
    <property type="molecule type" value="Genomic_DNA"/>
</dbReference>
<dbReference type="RefSeq" id="WP_005167354.1">
    <property type="nucleotide sequence ID" value="NC_008800.1"/>
</dbReference>
<dbReference type="RefSeq" id="YP_001005141.1">
    <property type="nucleotide sequence ID" value="NC_008800.1"/>
</dbReference>
<dbReference type="SMR" id="A1JJW5"/>
<dbReference type="KEGG" id="yen:YE0800"/>
<dbReference type="PATRIC" id="fig|393305.7.peg.895"/>
<dbReference type="eggNOG" id="COG3048">
    <property type="taxonomic scope" value="Bacteria"/>
</dbReference>
<dbReference type="HOGENOM" id="CLU_035707_0_0_6"/>
<dbReference type="OrthoDB" id="9780546at2"/>
<dbReference type="Proteomes" id="UP000000642">
    <property type="component" value="Chromosome"/>
</dbReference>
<dbReference type="GO" id="GO:0008721">
    <property type="term" value="F:D-serine ammonia-lyase activity"/>
    <property type="evidence" value="ECO:0007669"/>
    <property type="project" value="UniProtKB-EC"/>
</dbReference>
<dbReference type="GO" id="GO:0016836">
    <property type="term" value="F:hydro-lyase activity"/>
    <property type="evidence" value="ECO:0007669"/>
    <property type="project" value="UniProtKB-UniRule"/>
</dbReference>
<dbReference type="GO" id="GO:0030170">
    <property type="term" value="F:pyridoxal phosphate binding"/>
    <property type="evidence" value="ECO:0007669"/>
    <property type="project" value="InterPro"/>
</dbReference>
<dbReference type="GO" id="GO:0036088">
    <property type="term" value="P:D-serine catabolic process"/>
    <property type="evidence" value="ECO:0007669"/>
    <property type="project" value="TreeGrafter"/>
</dbReference>
<dbReference type="GO" id="GO:0009097">
    <property type="term" value="P:isoleucine biosynthetic process"/>
    <property type="evidence" value="ECO:0007669"/>
    <property type="project" value="TreeGrafter"/>
</dbReference>
<dbReference type="CDD" id="cd06447">
    <property type="entry name" value="D-Ser-dehyd"/>
    <property type="match status" value="1"/>
</dbReference>
<dbReference type="FunFam" id="3.40.50.1100:FF:000018">
    <property type="entry name" value="D-serine dehydratase"/>
    <property type="match status" value="1"/>
</dbReference>
<dbReference type="Gene3D" id="3.40.50.1100">
    <property type="match status" value="2"/>
</dbReference>
<dbReference type="HAMAP" id="MF_01030">
    <property type="entry name" value="D_Ser_dehydrat"/>
    <property type="match status" value="1"/>
</dbReference>
<dbReference type="InterPro" id="IPR011780">
    <property type="entry name" value="D_Ser_am_lyase"/>
</dbReference>
<dbReference type="InterPro" id="IPR050147">
    <property type="entry name" value="Ser/Thr_Dehydratase"/>
</dbReference>
<dbReference type="InterPro" id="IPR000634">
    <property type="entry name" value="Ser/Thr_deHydtase_PyrdxlP-BS"/>
</dbReference>
<dbReference type="InterPro" id="IPR001926">
    <property type="entry name" value="TrpB-like_PALP"/>
</dbReference>
<dbReference type="InterPro" id="IPR036052">
    <property type="entry name" value="TrpB-like_PALP_sf"/>
</dbReference>
<dbReference type="NCBIfam" id="TIGR02035">
    <property type="entry name" value="D_Ser_am_lyase"/>
    <property type="match status" value="1"/>
</dbReference>
<dbReference type="NCBIfam" id="NF002823">
    <property type="entry name" value="PRK02991.1"/>
    <property type="match status" value="1"/>
</dbReference>
<dbReference type="PANTHER" id="PTHR48078:SF9">
    <property type="entry name" value="D-SERINE DEHYDRATASE"/>
    <property type="match status" value="1"/>
</dbReference>
<dbReference type="PANTHER" id="PTHR48078">
    <property type="entry name" value="THREONINE DEHYDRATASE, MITOCHONDRIAL-RELATED"/>
    <property type="match status" value="1"/>
</dbReference>
<dbReference type="Pfam" id="PF00291">
    <property type="entry name" value="PALP"/>
    <property type="match status" value="1"/>
</dbReference>
<dbReference type="SUPFAM" id="SSF53686">
    <property type="entry name" value="Tryptophan synthase beta subunit-like PLP-dependent enzymes"/>
    <property type="match status" value="1"/>
</dbReference>
<dbReference type="PROSITE" id="PS00165">
    <property type="entry name" value="DEHYDRATASE_SER_THR"/>
    <property type="match status" value="1"/>
</dbReference>
<reference key="1">
    <citation type="journal article" date="2006" name="PLoS Genet.">
        <title>The complete genome sequence and comparative genome analysis of the high pathogenicity Yersinia enterocolitica strain 8081.</title>
        <authorList>
            <person name="Thomson N.R."/>
            <person name="Howard S."/>
            <person name="Wren B.W."/>
            <person name="Holden M.T.G."/>
            <person name="Crossman L."/>
            <person name="Challis G.L."/>
            <person name="Churcher C."/>
            <person name="Mungall K."/>
            <person name="Brooks K."/>
            <person name="Chillingworth T."/>
            <person name="Feltwell T."/>
            <person name="Abdellah Z."/>
            <person name="Hauser H."/>
            <person name="Jagels K."/>
            <person name="Maddison M."/>
            <person name="Moule S."/>
            <person name="Sanders M."/>
            <person name="Whitehead S."/>
            <person name="Quail M.A."/>
            <person name="Dougan G."/>
            <person name="Parkhill J."/>
            <person name="Prentice M.B."/>
        </authorList>
    </citation>
    <scope>NUCLEOTIDE SEQUENCE [LARGE SCALE GENOMIC DNA]</scope>
    <source>
        <strain>NCTC 13174 / 8081</strain>
    </source>
</reference>
<proteinExistence type="inferred from homology"/>
<keyword id="KW-0456">Lyase</keyword>
<keyword id="KW-0663">Pyridoxal phosphate</keyword>
<feature type="chain" id="PRO_0000291746" description="D-serine dehydratase">
    <location>
        <begin position="1"/>
        <end position="443"/>
    </location>
</feature>
<feature type="modified residue" description="N6-(pyridoxal phosphate)lysine" evidence="1">
    <location>
        <position position="118"/>
    </location>
</feature>
<sequence length="443" mass="48586">MNRTKIDKLITDYPLVKNLINLEEVTWFNPQATTLEKGLPYVGLSQQDVADAEARLQRFAPYLCQAFPETQKTKGIIESDIVAIPTMQNALQQRYGVAITGRLLLKKDSHLPISGSIKARGGIYEVLTHAEKLALQAGLLQETDDYSKLFSDDFRQFFRQYRIAVGSTGNLGMSIGIMSAKLGFSVSVHMSADAREWKKRKLREHGVNVVEYAQDYGVAVAQGRKQAESDPNCFFIDDENSPTLFLGYSVAGDRLKQQFAEQQIVVDENHPLFVYLPCGVGGGPGGVAFGLKLAFGDHVHCIFAEPTHSPCMLLGVYTGLHDGIAVQDIGIDNITAADGLAVGRASGFVGRAMEHLLDGFYTLSDAEMYDLLGLLNQYEGIRLEPSALAGMPGPARVSSSLDYLEQNHFSVEKMRNATHLVWATGGGMVPVEEMEKYLATAKI</sequence>
<protein>
    <recommendedName>
        <fullName evidence="1">D-serine dehydratase</fullName>
        <ecNumber evidence="1">4.3.1.18</ecNumber>
    </recommendedName>
    <alternativeName>
        <fullName evidence="1">D-serine deaminase</fullName>
        <shortName evidence="1">DSD</shortName>
    </alternativeName>
</protein>
<comment type="catalytic activity">
    <reaction evidence="1">
        <text>D-serine = pyruvate + NH4(+)</text>
        <dbReference type="Rhea" id="RHEA:13977"/>
        <dbReference type="ChEBI" id="CHEBI:15361"/>
        <dbReference type="ChEBI" id="CHEBI:28938"/>
        <dbReference type="ChEBI" id="CHEBI:35247"/>
        <dbReference type="EC" id="4.3.1.18"/>
    </reaction>
</comment>
<comment type="cofactor">
    <cofactor evidence="1">
        <name>pyridoxal 5'-phosphate</name>
        <dbReference type="ChEBI" id="CHEBI:597326"/>
    </cofactor>
</comment>
<comment type="subunit">
    <text evidence="1">Monomer.</text>
</comment>
<comment type="similarity">
    <text evidence="1">Belongs to the serine/threonine dehydratase family. DsdA subfamily.</text>
</comment>
<gene>
    <name evidence="1" type="primary">dsdA</name>
    <name type="ordered locus">YE0800</name>
</gene>